<sequence length="144" mass="16731">MTIVNILRVDIDQPFDYLDKQFYGNLTLRKLLVWRIFYVSKVFSQHVESLEFRKSLSGNIHVLVTINPGIQRTLVPLAQFLMGDDIMRTFMNLKRKGKGNYLFSYGNTDADRFLAERQIARKQKALNRKKSKTKNGEKNGEGKS</sequence>
<feature type="chain" id="PRO_0000384559" description="Uncharacterized protein ORF144">
    <location>
        <begin position="1"/>
        <end position="144"/>
    </location>
</feature>
<feature type="region of interest" description="Disordered" evidence="1">
    <location>
        <begin position="124"/>
        <end position="144"/>
    </location>
</feature>
<feature type="compositionally biased region" description="Basic residues" evidence="1">
    <location>
        <begin position="124"/>
        <end position="133"/>
    </location>
</feature>
<feature type="compositionally biased region" description="Basic and acidic residues" evidence="1">
    <location>
        <begin position="134"/>
        <end position="144"/>
    </location>
</feature>
<keyword id="KW-1185">Reference proteome</keyword>
<organism>
    <name type="scientific">Acidianus filamentous virus 1 (isolate United States/Yellowstone)</name>
    <name type="common">AFV-1</name>
    <dbReference type="NCBI Taxonomy" id="654909"/>
    <lineage>
        <taxon>Viruses</taxon>
        <taxon>Adnaviria</taxon>
        <taxon>Zilligvirae</taxon>
        <taxon>Taleaviricota</taxon>
        <taxon>Tokiviricetes</taxon>
        <taxon>Ligamenvirales</taxon>
        <taxon>Ungulaviridae</taxon>
        <taxon>Captovirus</taxon>
        <taxon>Acidianus filamentous virus 1</taxon>
    </lineage>
</organism>
<reference key="1">
    <citation type="journal article" date="2003" name="Virology">
        <title>AFV1, a novel virus infecting hyperthermophilic archaea of the genus acidianus.</title>
        <authorList>
            <person name="Bettstetter M."/>
            <person name="Peng X."/>
            <person name="Garrett R.A."/>
            <person name="Prangishvili D."/>
        </authorList>
    </citation>
    <scope>NUCLEOTIDE SEQUENCE [GENOMIC DNA]</scope>
</reference>
<dbReference type="EMBL" id="AJ567472">
    <property type="protein sequence ID" value="CAD98941.1"/>
    <property type="molecule type" value="Genomic_DNA"/>
</dbReference>
<dbReference type="RefSeq" id="YP_003737.1">
    <property type="nucleotide sequence ID" value="NC_005830.1"/>
</dbReference>
<dbReference type="KEGG" id="vg:2769172"/>
<dbReference type="Proteomes" id="UP000000514">
    <property type="component" value="Genome"/>
</dbReference>
<proteinExistence type="predicted"/>
<gene>
    <name type="ORF">ORF144</name>
</gene>
<name>Y144_AFV1Y</name>
<protein>
    <recommendedName>
        <fullName>Uncharacterized protein ORF144</fullName>
    </recommendedName>
</protein>
<organismHost>
    <name type="scientific">Acidianus hospitalis</name>
    <dbReference type="NCBI Taxonomy" id="563177"/>
</organismHost>
<organismHost>
    <name type="scientific">Acidianus infernus</name>
    <dbReference type="NCBI Taxonomy" id="12915"/>
</organismHost>
<accession>Q70LD9</accession>
<evidence type="ECO:0000256" key="1">
    <source>
        <dbReference type="SAM" id="MobiDB-lite"/>
    </source>
</evidence>